<feature type="chain" id="PRO_0000319263" description="Formate-dependent phosphoribosylglycinamide formyltransferase">
    <location>
        <begin position="1"/>
        <end position="387"/>
    </location>
</feature>
<feature type="domain" description="ATP-grasp" evidence="1">
    <location>
        <begin position="118"/>
        <end position="306"/>
    </location>
</feature>
<feature type="binding site" evidence="1">
    <location>
        <begin position="21"/>
        <end position="22"/>
    </location>
    <ligand>
        <name>N(1)-(5-phospho-beta-D-ribosyl)glycinamide</name>
        <dbReference type="ChEBI" id="CHEBI:143788"/>
    </ligand>
</feature>
<feature type="binding site" evidence="1">
    <location>
        <position position="81"/>
    </location>
    <ligand>
        <name>N(1)-(5-phospho-beta-D-ribosyl)glycinamide</name>
        <dbReference type="ChEBI" id="CHEBI:143788"/>
    </ligand>
</feature>
<feature type="binding site" evidence="1">
    <location>
        <position position="113"/>
    </location>
    <ligand>
        <name>ATP</name>
        <dbReference type="ChEBI" id="CHEBI:30616"/>
    </ligand>
</feature>
<feature type="binding site" evidence="1">
    <location>
        <position position="154"/>
    </location>
    <ligand>
        <name>ATP</name>
        <dbReference type="ChEBI" id="CHEBI:30616"/>
    </ligand>
</feature>
<feature type="binding site" evidence="1">
    <location>
        <begin position="159"/>
        <end position="164"/>
    </location>
    <ligand>
        <name>ATP</name>
        <dbReference type="ChEBI" id="CHEBI:30616"/>
    </ligand>
</feature>
<feature type="binding site" evidence="1">
    <location>
        <begin position="193"/>
        <end position="196"/>
    </location>
    <ligand>
        <name>ATP</name>
        <dbReference type="ChEBI" id="CHEBI:30616"/>
    </ligand>
</feature>
<feature type="binding site" evidence="1">
    <location>
        <position position="201"/>
    </location>
    <ligand>
        <name>ATP</name>
        <dbReference type="ChEBI" id="CHEBI:30616"/>
    </ligand>
</feature>
<feature type="binding site" evidence="1">
    <location>
        <position position="265"/>
    </location>
    <ligand>
        <name>Mg(2+)</name>
        <dbReference type="ChEBI" id="CHEBI:18420"/>
    </ligand>
</feature>
<feature type="binding site" evidence="1">
    <location>
        <position position="277"/>
    </location>
    <ligand>
        <name>Mg(2+)</name>
        <dbReference type="ChEBI" id="CHEBI:18420"/>
    </ligand>
</feature>
<feature type="binding site" evidence="1">
    <location>
        <position position="284"/>
    </location>
    <ligand>
        <name>N(1)-(5-phospho-beta-D-ribosyl)glycinamide</name>
        <dbReference type="ChEBI" id="CHEBI:143788"/>
    </ligand>
</feature>
<feature type="binding site" evidence="1">
    <location>
        <position position="352"/>
    </location>
    <ligand>
        <name>N(1)-(5-phospho-beta-D-ribosyl)glycinamide</name>
        <dbReference type="ChEBI" id="CHEBI:143788"/>
    </ligand>
</feature>
<feature type="binding site" evidence="1">
    <location>
        <begin position="359"/>
        <end position="360"/>
    </location>
    <ligand>
        <name>N(1)-(5-phospho-beta-D-ribosyl)glycinamide</name>
        <dbReference type="ChEBI" id="CHEBI:143788"/>
    </ligand>
</feature>
<name>PURT_WOLSU</name>
<gene>
    <name evidence="1" type="primary">purT</name>
    <name type="synonym">pur</name>
    <name type="ordered locus">WS1646</name>
</gene>
<organism>
    <name type="scientific">Wolinella succinogenes (strain ATCC 29543 / DSM 1740 / CCUG 13145 / JCM 31913 / LMG 7466 / NCTC 11488 / FDC 602W)</name>
    <name type="common">Vibrio succinogenes</name>
    <dbReference type="NCBI Taxonomy" id="273121"/>
    <lineage>
        <taxon>Bacteria</taxon>
        <taxon>Pseudomonadati</taxon>
        <taxon>Campylobacterota</taxon>
        <taxon>Epsilonproteobacteria</taxon>
        <taxon>Campylobacterales</taxon>
        <taxon>Helicobacteraceae</taxon>
        <taxon>Wolinella</taxon>
    </lineage>
</organism>
<evidence type="ECO:0000255" key="1">
    <source>
        <dbReference type="HAMAP-Rule" id="MF_01643"/>
    </source>
</evidence>
<sequence length="387" mass="42742">MKFPSPFTPNSIKIMLLGSGELGKEVIIEAQRLGLETIAVDKYENAPAHGVAHRSYVVNMQDKEALLDLIQKENPTYILPEVEAISLEALLEAEEKGFCVIPSAKAVSLTMNRKGIRTFAAEEVGVKTSQYRFVKTLDELRSAAEEIGYPCVIKPVMSSSGHGQSVCRMAEEIEACFEEAKEARGDSSELIVEEFIPFDYEITLLTLNNGKKITFCDPIGHIQKGGDYIFSWQPAQMKKSVLKKAQKIARDVVSALGGRGIFGVELFIKKNEVYFSEVSPRPHDTGMVTLITQNFSEFALHLRAVLGAPLHVERISAGASAAFKSSQESQTPSVTLPKEAYAKDCDFRVFGKPVSHEGRRMAVLLIKDEEAESALKRAKKLIKKVSE</sequence>
<keyword id="KW-0067">ATP-binding</keyword>
<keyword id="KW-0436">Ligase</keyword>
<keyword id="KW-0460">Magnesium</keyword>
<keyword id="KW-0479">Metal-binding</keyword>
<keyword id="KW-0547">Nucleotide-binding</keyword>
<keyword id="KW-0658">Purine biosynthesis</keyword>
<keyword id="KW-1185">Reference proteome</keyword>
<accession>Q7M8I0</accession>
<protein>
    <recommendedName>
        <fullName evidence="1">Formate-dependent phosphoribosylglycinamide formyltransferase</fullName>
        <ecNumber evidence="1">6.3.1.21</ecNumber>
    </recommendedName>
    <alternativeName>
        <fullName evidence="1">5'-phosphoribosylglycinamide transformylase 2</fullName>
    </alternativeName>
    <alternativeName>
        <fullName evidence="1">Formate-dependent GAR transformylase</fullName>
    </alternativeName>
    <alternativeName>
        <fullName evidence="1">GAR transformylase 2</fullName>
        <shortName evidence="1">GART 2</shortName>
    </alternativeName>
    <alternativeName>
        <fullName evidence="1">Non-folate glycinamide ribonucleotide transformylase</fullName>
    </alternativeName>
    <alternativeName>
        <fullName evidence="1">Phosphoribosylglycinamide formyltransferase 2</fullName>
    </alternativeName>
</protein>
<reference key="1">
    <citation type="journal article" date="2003" name="Proc. Natl. Acad. Sci. U.S.A.">
        <title>Complete genome sequence and analysis of Wolinella succinogenes.</title>
        <authorList>
            <person name="Baar C."/>
            <person name="Eppinger M."/>
            <person name="Raddatz G."/>
            <person name="Simon J."/>
            <person name="Lanz C."/>
            <person name="Klimmek O."/>
            <person name="Nandakumar R."/>
            <person name="Gross R."/>
            <person name="Rosinus A."/>
            <person name="Keller H."/>
            <person name="Jagtap P."/>
            <person name="Linke B."/>
            <person name="Meyer F."/>
            <person name="Lederer H."/>
            <person name="Schuster S.C."/>
        </authorList>
    </citation>
    <scope>NUCLEOTIDE SEQUENCE [LARGE SCALE GENOMIC DNA]</scope>
    <source>
        <strain>ATCC 29543 / DSM 1740 / CCUG 13145 / JCM 31913 / LMG 7466 / NCTC 11488 / FDC 602W</strain>
    </source>
</reference>
<comment type="function">
    <text evidence="1">Involved in the de novo purine biosynthesis. Catalyzes the transfer of formate to 5-phospho-ribosyl-glycinamide (GAR), producing 5-phospho-ribosyl-N-formylglycinamide (FGAR). Formate is provided by PurU via hydrolysis of 10-formyl-tetrahydrofolate.</text>
</comment>
<comment type="catalytic activity">
    <reaction evidence="1">
        <text>N(1)-(5-phospho-beta-D-ribosyl)glycinamide + formate + ATP = N(2)-formyl-N(1)-(5-phospho-beta-D-ribosyl)glycinamide + ADP + phosphate + H(+)</text>
        <dbReference type="Rhea" id="RHEA:24829"/>
        <dbReference type="ChEBI" id="CHEBI:15378"/>
        <dbReference type="ChEBI" id="CHEBI:15740"/>
        <dbReference type="ChEBI" id="CHEBI:30616"/>
        <dbReference type="ChEBI" id="CHEBI:43474"/>
        <dbReference type="ChEBI" id="CHEBI:143788"/>
        <dbReference type="ChEBI" id="CHEBI:147286"/>
        <dbReference type="ChEBI" id="CHEBI:456216"/>
        <dbReference type="EC" id="6.3.1.21"/>
    </reaction>
    <physiologicalReaction direction="left-to-right" evidence="1">
        <dbReference type="Rhea" id="RHEA:24830"/>
    </physiologicalReaction>
</comment>
<comment type="pathway">
    <text evidence="1">Purine metabolism; IMP biosynthesis via de novo pathway; N(2)-formyl-N(1)-(5-phospho-D-ribosyl)glycinamide from N(1)-(5-phospho-D-ribosyl)glycinamide (formate route): step 1/1.</text>
</comment>
<comment type="subunit">
    <text evidence="1">Homodimer.</text>
</comment>
<comment type="similarity">
    <text evidence="1">Belongs to the PurK/PurT family.</text>
</comment>
<proteinExistence type="inferred from homology"/>
<dbReference type="EC" id="6.3.1.21" evidence="1"/>
<dbReference type="EMBL" id="BX571661">
    <property type="protein sequence ID" value="CAE10677.1"/>
    <property type="molecule type" value="Genomic_DNA"/>
</dbReference>
<dbReference type="RefSeq" id="WP_011139461.1">
    <property type="nucleotide sequence ID" value="NC_005090.1"/>
</dbReference>
<dbReference type="SMR" id="Q7M8I0"/>
<dbReference type="STRING" id="273121.WS1646"/>
<dbReference type="KEGG" id="wsu:WS1646"/>
<dbReference type="eggNOG" id="COG0027">
    <property type="taxonomic scope" value="Bacteria"/>
</dbReference>
<dbReference type="HOGENOM" id="CLU_011534_1_3_7"/>
<dbReference type="UniPathway" id="UPA00074">
    <property type="reaction ID" value="UER00127"/>
</dbReference>
<dbReference type="Proteomes" id="UP000000422">
    <property type="component" value="Chromosome"/>
</dbReference>
<dbReference type="GO" id="GO:0005829">
    <property type="term" value="C:cytosol"/>
    <property type="evidence" value="ECO:0007669"/>
    <property type="project" value="TreeGrafter"/>
</dbReference>
<dbReference type="GO" id="GO:0005524">
    <property type="term" value="F:ATP binding"/>
    <property type="evidence" value="ECO:0007669"/>
    <property type="project" value="UniProtKB-UniRule"/>
</dbReference>
<dbReference type="GO" id="GO:0000287">
    <property type="term" value="F:magnesium ion binding"/>
    <property type="evidence" value="ECO:0007669"/>
    <property type="project" value="InterPro"/>
</dbReference>
<dbReference type="GO" id="GO:0043815">
    <property type="term" value="F:phosphoribosylglycinamide formyltransferase 2 activity"/>
    <property type="evidence" value="ECO:0007669"/>
    <property type="project" value="UniProtKB-UniRule"/>
</dbReference>
<dbReference type="GO" id="GO:0004644">
    <property type="term" value="F:phosphoribosylglycinamide formyltransferase activity"/>
    <property type="evidence" value="ECO:0007669"/>
    <property type="project" value="InterPro"/>
</dbReference>
<dbReference type="GO" id="GO:0006189">
    <property type="term" value="P:'de novo' IMP biosynthetic process"/>
    <property type="evidence" value="ECO:0007669"/>
    <property type="project" value="UniProtKB-UniRule"/>
</dbReference>
<dbReference type="Gene3D" id="3.40.50.20">
    <property type="match status" value="1"/>
</dbReference>
<dbReference type="Gene3D" id="3.30.1490.20">
    <property type="entry name" value="ATP-grasp fold, A domain"/>
    <property type="match status" value="1"/>
</dbReference>
<dbReference type="Gene3D" id="3.30.470.20">
    <property type="entry name" value="ATP-grasp fold, B domain"/>
    <property type="match status" value="1"/>
</dbReference>
<dbReference type="HAMAP" id="MF_01643">
    <property type="entry name" value="PurT"/>
    <property type="match status" value="1"/>
</dbReference>
<dbReference type="InterPro" id="IPR011761">
    <property type="entry name" value="ATP-grasp"/>
</dbReference>
<dbReference type="InterPro" id="IPR003135">
    <property type="entry name" value="ATP-grasp_carboxylate-amine"/>
</dbReference>
<dbReference type="InterPro" id="IPR013815">
    <property type="entry name" value="ATP_grasp_subdomain_1"/>
</dbReference>
<dbReference type="InterPro" id="IPR016185">
    <property type="entry name" value="PreATP-grasp_dom_sf"/>
</dbReference>
<dbReference type="InterPro" id="IPR005862">
    <property type="entry name" value="PurT"/>
</dbReference>
<dbReference type="InterPro" id="IPR054350">
    <property type="entry name" value="PurT/PurK_preATP-grasp"/>
</dbReference>
<dbReference type="InterPro" id="IPR048740">
    <property type="entry name" value="PurT_C"/>
</dbReference>
<dbReference type="InterPro" id="IPR011054">
    <property type="entry name" value="Rudment_hybrid_motif"/>
</dbReference>
<dbReference type="NCBIfam" id="NF006766">
    <property type="entry name" value="PRK09288.1"/>
    <property type="match status" value="1"/>
</dbReference>
<dbReference type="NCBIfam" id="TIGR01142">
    <property type="entry name" value="purT"/>
    <property type="match status" value="1"/>
</dbReference>
<dbReference type="PANTHER" id="PTHR43055">
    <property type="entry name" value="FORMATE-DEPENDENT PHOSPHORIBOSYLGLYCINAMIDE FORMYLTRANSFERASE"/>
    <property type="match status" value="1"/>
</dbReference>
<dbReference type="PANTHER" id="PTHR43055:SF1">
    <property type="entry name" value="FORMATE-DEPENDENT PHOSPHORIBOSYLGLYCINAMIDE FORMYLTRANSFERASE"/>
    <property type="match status" value="1"/>
</dbReference>
<dbReference type="Pfam" id="PF02222">
    <property type="entry name" value="ATP-grasp"/>
    <property type="match status" value="1"/>
</dbReference>
<dbReference type="Pfam" id="PF21244">
    <property type="entry name" value="PurT_C"/>
    <property type="match status" value="1"/>
</dbReference>
<dbReference type="Pfam" id="PF22660">
    <property type="entry name" value="RS_preATP-grasp-like"/>
    <property type="match status" value="1"/>
</dbReference>
<dbReference type="SUPFAM" id="SSF56059">
    <property type="entry name" value="Glutathione synthetase ATP-binding domain-like"/>
    <property type="match status" value="1"/>
</dbReference>
<dbReference type="SUPFAM" id="SSF52440">
    <property type="entry name" value="PreATP-grasp domain"/>
    <property type="match status" value="1"/>
</dbReference>
<dbReference type="SUPFAM" id="SSF51246">
    <property type="entry name" value="Rudiment single hybrid motif"/>
    <property type="match status" value="1"/>
</dbReference>
<dbReference type="PROSITE" id="PS50975">
    <property type="entry name" value="ATP_GRASP"/>
    <property type="match status" value="1"/>
</dbReference>